<feature type="chain" id="PRO_0000076635" description="Cyclic AMP response element-binding protein A">
    <location>
        <begin position="1"/>
        <end position="516"/>
    </location>
</feature>
<feature type="domain" description="bZIP" evidence="1">
    <location>
        <begin position="441"/>
        <end position="504"/>
    </location>
</feature>
<feature type="region of interest" description="Disordered" evidence="2">
    <location>
        <begin position="213"/>
        <end position="237"/>
    </location>
</feature>
<feature type="region of interest" description="Disordered" evidence="2">
    <location>
        <begin position="294"/>
        <end position="338"/>
    </location>
</feature>
<feature type="region of interest" description="Disordered" evidence="2">
    <location>
        <begin position="353"/>
        <end position="408"/>
    </location>
</feature>
<feature type="region of interest" description="Basic motif" evidence="1">
    <location>
        <begin position="443"/>
        <end position="463"/>
    </location>
</feature>
<feature type="region of interest" description="Leucine-zipper" evidence="1">
    <location>
        <begin position="469"/>
        <end position="476"/>
    </location>
</feature>
<feature type="compositionally biased region" description="Low complexity" evidence="2">
    <location>
        <begin position="221"/>
        <end position="237"/>
    </location>
</feature>
<feature type="compositionally biased region" description="Low complexity" evidence="2">
    <location>
        <begin position="361"/>
        <end position="392"/>
    </location>
</feature>
<feature type="modified residue" description="Phosphoserine" evidence="5">
    <location>
        <position position="75"/>
    </location>
</feature>
<feature type="modified residue" description="Phosphoserine" evidence="5">
    <location>
        <position position="79"/>
    </location>
</feature>
<feature type="modified residue" description="Phosphoserine" evidence="5">
    <location>
        <position position="82"/>
    </location>
</feature>
<feature type="sequence conflict" description="In Ref. 1; CAA45771 and 2; AAA28427." evidence="6" ref="1 2">
    <original>Y</original>
    <variation>C</variation>
    <location>
        <position position="114"/>
    </location>
</feature>
<feature type="sequence conflict" description="In Ref. 1; CAA45771." evidence="6" ref="1">
    <original>QQ</original>
    <variation>HE</variation>
    <location>
        <begin position="277"/>
        <end position="278"/>
    </location>
</feature>
<feature type="sequence conflict" description="In Ref. 1; CAA45771 and 7; AAR82739." evidence="6" ref="1 7">
    <original>D</original>
    <variation>G</variation>
    <location>
        <position position="305"/>
    </location>
</feature>
<feature type="sequence conflict" description="In Ref. 1; CAA45771." evidence="6" ref="1">
    <original>L</original>
    <variation>T</variation>
    <location>
        <position position="316"/>
    </location>
</feature>
<feature type="sequence conflict" description="In Ref. 1; CAA45771." evidence="6" ref="1">
    <original>APLSPNATVSISVANPAGGESSVRVSR</original>
    <variation>RHCRPTQPFPSLWPIQPAVSHPYGSA</variation>
    <location>
        <begin position="338"/>
        <end position="364"/>
    </location>
</feature>
<organism>
    <name type="scientific">Drosophila melanogaster</name>
    <name type="common">Fruit fly</name>
    <dbReference type="NCBI Taxonomy" id="7227"/>
    <lineage>
        <taxon>Eukaryota</taxon>
        <taxon>Metazoa</taxon>
        <taxon>Ecdysozoa</taxon>
        <taxon>Arthropoda</taxon>
        <taxon>Hexapoda</taxon>
        <taxon>Insecta</taxon>
        <taxon>Pterygota</taxon>
        <taxon>Neoptera</taxon>
        <taxon>Endopterygota</taxon>
        <taxon>Diptera</taxon>
        <taxon>Brachycera</taxon>
        <taxon>Muscomorpha</taxon>
        <taxon>Ephydroidea</taxon>
        <taxon>Drosophilidae</taxon>
        <taxon>Drosophila</taxon>
        <taxon>Sophophora</taxon>
    </lineage>
</organism>
<gene>
    <name type="primary">CrebA</name>
    <name type="synonym">Bbbf2</name>
    <name type="ORF">CG7450</name>
</gene>
<protein>
    <recommendedName>
        <fullName>Cyclic AMP response element-binding protein A</fullName>
        <shortName>cAMP response element-binding protein A</shortName>
        <shortName>dCREB-A</shortName>
    </recommendedName>
    <alternativeName>
        <fullName>Box B-binding factor 2</fullName>
        <shortName>BBF-2</shortName>
    </alternativeName>
</protein>
<comment type="function">
    <text evidence="3 4">Transcriptional activator. Binds to fat body-specific enhancers of alcohol dehydrogenase (ADH) and yolk protein genes. BBF-2 may play a role in fat body gene expression. It binds the consensus sequence 5'-T[AC]NACGTAN[TG]C-3'.</text>
</comment>
<comment type="subunit">
    <text>May bind DNA as heterodimers with other bZIP proteins.</text>
</comment>
<comment type="subcellular location">
    <subcellularLocation>
        <location>Nucleus</location>
    </subcellularLocation>
</comment>
<comment type="tissue specificity">
    <text evidence="3">In all cell types examined, including developing salivary gland in embryos and in adults, brain and optic lobe cell bodies, salivary gland, midgut epithelial cells of the cardia, female ovarian columnar follicle cells and male seminal vesicle, ejaculatory duct, and ejaculatory bulb.</text>
</comment>
<comment type="developmental stage">
    <text>Present throughout development.</text>
</comment>
<comment type="similarity">
    <text evidence="6">Belongs to the bZIP family.</text>
</comment>
<comment type="sequence caution" evidence="6">
    <conflict type="miscellaneous discrepancy">
        <sequence resource="EMBL-CDS" id="AAU21396"/>
    </conflict>
    <text>Intron retention.</text>
</comment>
<dbReference type="EMBL" id="X64429">
    <property type="protein sequence ID" value="CAA45771.1"/>
    <property type="molecule type" value="mRNA"/>
</dbReference>
<dbReference type="EMBL" id="M87038">
    <property type="protein sequence ID" value="AAA28427.1"/>
    <property type="molecule type" value="mRNA"/>
</dbReference>
<dbReference type="EMBL" id="AE014296">
    <property type="protein sequence ID" value="AAF49621.2"/>
    <property type="molecule type" value="Genomic_DNA"/>
</dbReference>
<dbReference type="EMBL" id="AY122251">
    <property type="protein sequence ID" value="AAU21396.1"/>
    <property type="status" value="ALT_SEQ"/>
    <property type="molecule type" value="mRNA"/>
</dbReference>
<dbReference type="EMBL" id="BT011074">
    <property type="protein sequence ID" value="AAR82739.1"/>
    <property type="molecule type" value="mRNA"/>
</dbReference>
<dbReference type="PIR" id="A42140">
    <property type="entry name" value="A42140"/>
</dbReference>
<dbReference type="PIR" id="A44494">
    <property type="entry name" value="A44494"/>
</dbReference>
<dbReference type="RefSeq" id="NP_524087.3">
    <property type="nucleotide sequence ID" value="NM_079363.5"/>
</dbReference>
<dbReference type="RefSeq" id="NP_996096.1">
    <property type="nucleotide sequence ID" value="NM_206374.2"/>
</dbReference>
<dbReference type="SMR" id="P29747"/>
<dbReference type="BioGRID" id="65001">
    <property type="interactions" value="10"/>
</dbReference>
<dbReference type="ELM" id="P29747"/>
<dbReference type="FunCoup" id="P29747">
    <property type="interactions" value="32"/>
</dbReference>
<dbReference type="IntAct" id="P29747">
    <property type="interactions" value="5"/>
</dbReference>
<dbReference type="STRING" id="7227.FBpp0089339"/>
<dbReference type="iPTMnet" id="P29747"/>
<dbReference type="PaxDb" id="7227-FBpp0089339"/>
<dbReference type="DNASU" id="39682"/>
<dbReference type="EnsemblMetazoa" id="FBtr0075557">
    <property type="protein sequence ID" value="FBpp0075311"/>
    <property type="gene ID" value="FBgn0004396"/>
</dbReference>
<dbReference type="EnsemblMetazoa" id="FBtr0075558">
    <property type="protein sequence ID" value="FBpp0089339"/>
    <property type="gene ID" value="FBgn0004396"/>
</dbReference>
<dbReference type="GeneID" id="39682"/>
<dbReference type="KEGG" id="dme:Dmel_CG7450"/>
<dbReference type="AGR" id="FB:FBgn0004396"/>
<dbReference type="CTD" id="39682"/>
<dbReference type="FlyBase" id="FBgn0004396">
    <property type="gene designation" value="CrebA"/>
</dbReference>
<dbReference type="VEuPathDB" id="VectorBase:FBgn0004396"/>
<dbReference type="eggNOG" id="KOG0709">
    <property type="taxonomic scope" value="Eukaryota"/>
</dbReference>
<dbReference type="HOGENOM" id="CLU_050111_1_0_1"/>
<dbReference type="InParanoid" id="P29747"/>
<dbReference type="OMA" id="MDDECYP"/>
<dbReference type="OrthoDB" id="674948at2759"/>
<dbReference type="PhylomeDB" id="P29747"/>
<dbReference type="BioGRID-ORCS" id="39682">
    <property type="hits" value="0 hits in 3 CRISPR screens"/>
</dbReference>
<dbReference type="ChiTaRS" id="CrebA">
    <property type="organism name" value="fly"/>
</dbReference>
<dbReference type="GenomeRNAi" id="39682"/>
<dbReference type="PRO" id="PR:P29747"/>
<dbReference type="Proteomes" id="UP000000803">
    <property type="component" value="Chromosome 3L"/>
</dbReference>
<dbReference type="Bgee" id="FBgn0004396">
    <property type="expression patterns" value="Expressed in adult oenocyte (Drosophila) in adult thorax and 238 other cell types or tissues"/>
</dbReference>
<dbReference type="ExpressionAtlas" id="P29747">
    <property type="expression patterns" value="baseline and differential"/>
</dbReference>
<dbReference type="GO" id="GO:0000785">
    <property type="term" value="C:chromatin"/>
    <property type="evidence" value="ECO:0000314"/>
    <property type="project" value="FlyBase"/>
</dbReference>
<dbReference type="GO" id="GO:0042645">
    <property type="term" value="C:mitochondrial nucleoid"/>
    <property type="evidence" value="ECO:0000314"/>
    <property type="project" value="FlyBase"/>
</dbReference>
<dbReference type="GO" id="GO:0005730">
    <property type="term" value="C:nucleolus"/>
    <property type="evidence" value="ECO:0000314"/>
    <property type="project" value="FlyBase"/>
</dbReference>
<dbReference type="GO" id="GO:0005634">
    <property type="term" value="C:nucleus"/>
    <property type="evidence" value="ECO:0000314"/>
    <property type="project" value="FlyBase"/>
</dbReference>
<dbReference type="GO" id="GO:0005667">
    <property type="term" value="C:transcription regulator complex"/>
    <property type="evidence" value="ECO:0000353"/>
    <property type="project" value="FlyBase"/>
</dbReference>
<dbReference type="GO" id="GO:0035497">
    <property type="term" value="F:cAMP response element binding"/>
    <property type="evidence" value="ECO:0000318"/>
    <property type="project" value="GO_Central"/>
</dbReference>
<dbReference type="GO" id="GO:0003682">
    <property type="term" value="F:chromatin binding"/>
    <property type="evidence" value="ECO:0000314"/>
    <property type="project" value="FlyBase"/>
</dbReference>
<dbReference type="GO" id="GO:0000987">
    <property type="term" value="F:cis-regulatory region sequence-specific DNA binding"/>
    <property type="evidence" value="ECO:0000314"/>
    <property type="project" value="FlyBase"/>
</dbReference>
<dbReference type="GO" id="GO:0003677">
    <property type="term" value="F:DNA binding"/>
    <property type="evidence" value="ECO:0000314"/>
    <property type="project" value="FlyBase"/>
</dbReference>
<dbReference type="GO" id="GO:0003700">
    <property type="term" value="F:DNA-binding transcription factor activity"/>
    <property type="evidence" value="ECO:0000314"/>
    <property type="project" value="FlyBase"/>
</dbReference>
<dbReference type="GO" id="GO:0000981">
    <property type="term" value="F:DNA-binding transcription factor activity, RNA polymerase II-specific"/>
    <property type="evidence" value="ECO:0000318"/>
    <property type="project" value="GO_Central"/>
</dbReference>
<dbReference type="GO" id="GO:0043565">
    <property type="term" value="F:sequence-specific DNA binding"/>
    <property type="evidence" value="ECO:0000314"/>
    <property type="project" value="FlyBase"/>
</dbReference>
<dbReference type="GO" id="GO:0035293">
    <property type="term" value="P:chitin-based larval cuticle pattern formation"/>
    <property type="evidence" value="ECO:0000315"/>
    <property type="project" value="FlyBase"/>
</dbReference>
<dbReference type="GO" id="GO:0009953">
    <property type="term" value="P:dorsal/ventral pattern formation"/>
    <property type="evidence" value="ECO:0000316"/>
    <property type="project" value="FlyBase"/>
</dbReference>
<dbReference type="GO" id="GO:0008363">
    <property type="term" value="P:larval chitin-based cuticle development"/>
    <property type="evidence" value="ECO:0000315"/>
    <property type="project" value="FlyBase"/>
</dbReference>
<dbReference type="GO" id="GO:0045893">
    <property type="term" value="P:positive regulation of DNA-templated transcription"/>
    <property type="evidence" value="ECO:0000315"/>
    <property type="project" value="FlyBase"/>
</dbReference>
<dbReference type="GO" id="GO:0045944">
    <property type="term" value="P:positive regulation of transcription by RNA polymerase II"/>
    <property type="evidence" value="ECO:0000314"/>
    <property type="project" value="FlyBase"/>
</dbReference>
<dbReference type="GO" id="GO:1903108">
    <property type="term" value="P:regulation of mitochondrial transcription"/>
    <property type="evidence" value="ECO:0000314"/>
    <property type="project" value="FlyBase"/>
</dbReference>
<dbReference type="GO" id="GO:0006357">
    <property type="term" value="P:regulation of transcription by RNA polymerase II"/>
    <property type="evidence" value="ECO:0000318"/>
    <property type="project" value="GO_Central"/>
</dbReference>
<dbReference type="GO" id="GO:0007431">
    <property type="term" value="P:salivary gland development"/>
    <property type="evidence" value="ECO:0000315"/>
    <property type="project" value="FlyBase"/>
</dbReference>
<dbReference type="CDD" id="cd14689">
    <property type="entry name" value="bZIP_CREB3"/>
    <property type="match status" value="1"/>
</dbReference>
<dbReference type="FunFam" id="1.20.5.170:FF:000054">
    <property type="entry name" value="Cyclic AMP-responsive element-binding protein 3-like 2"/>
    <property type="match status" value="1"/>
</dbReference>
<dbReference type="Gene3D" id="1.20.5.170">
    <property type="match status" value="1"/>
</dbReference>
<dbReference type="InterPro" id="IPR004827">
    <property type="entry name" value="bZIP"/>
</dbReference>
<dbReference type="InterPro" id="IPR046347">
    <property type="entry name" value="bZIP_sf"/>
</dbReference>
<dbReference type="PANTHER" id="PTHR46004">
    <property type="entry name" value="CYCLIC AMP RESPONSE ELEMENT-BINDING PROTEIN A"/>
    <property type="match status" value="1"/>
</dbReference>
<dbReference type="PANTHER" id="PTHR46004:SF3">
    <property type="entry name" value="CYCLIC AMP RESPONSE ELEMENT-BINDING PROTEIN A"/>
    <property type="match status" value="1"/>
</dbReference>
<dbReference type="Pfam" id="PF00170">
    <property type="entry name" value="bZIP_1"/>
    <property type="match status" value="1"/>
</dbReference>
<dbReference type="SMART" id="SM00338">
    <property type="entry name" value="BRLZ"/>
    <property type="match status" value="1"/>
</dbReference>
<dbReference type="SUPFAM" id="SSF57959">
    <property type="entry name" value="Leucine zipper domain"/>
    <property type="match status" value="1"/>
</dbReference>
<dbReference type="PROSITE" id="PS50217">
    <property type="entry name" value="BZIP"/>
    <property type="match status" value="1"/>
</dbReference>
<dbReference type="PROSITE" id="PS00036">
    <property type="entry name" value="BZIP_BASIC"/>
    <property type="match status" value="1"/>
</dbReference>
<keyword id="KW-0010">Activator</keyword>
<keyword id="KW-0238">DNA-binding</keyword>
<keyword id="KW-0539">Nucleus</keyword>
<keyword id="KW-0597">Phosphoprotein</keyword>
<keyword id="KW-1185">Reference proteome</keyword>
<keyword id="KW-0804">Transcription</keyword>
<keyword id="KW-0805">Transcription regulation</keyword>
<accession>P29747</accession>
<accession>Q24282</accession>
<accession>Q64M72</accession>
<accession>Q8MQX0</accession>
<accession>Q9VUQ4</accession>
<evidence type="ECO:0000255" key="1">
    <source>
        <dbReference type="PROSITE-ProRule" id="PRU00978"/>
    </source>
</evidence>
<evidence type="ECO:0000256" key="2">
    <source>
        <dbReference type="SAM" id="MobiDB-lite"/>
    </source>
</evidence>
<evidence type="ECO:0000269" key="3">
    <source>
    </source>
</evidence>
<evidence type="ECO:0000269" key="4">
    <source>
    </source>
</evidence>
<evidence type="ECO:0000269" key="5">
    <source>
    </source>
</evidence>
<evidence type="ECO:0000305" key="6"/>
<name>CREBA_DROME</name>
<proteinExistence type="evidence at protein level"/>
<sequence>MEFYDGDLKDIWDSDLDPESLKISPDHDMHDWLFDRDVKDPTVILNDKLISDALLNGTQPIKTEHSYSLSSDVDSLPDSPKSLQAKIEDMDDECFPAISPKTATNGRVTIDPKYLTFHVPPTHATPISRLSSNPALNTSVADLTRSSGLQSLQAHQPHHGSGSSHVVVANLEHFQLPQHLYDNDCSSSVSSLRDGSMSPDICSDIEIDESAIKDEPMSPDSSCPASPTSQASSSQHQLSLNLAHLQSEMLFEPKHCGLLLTASSNSNNSLIKSQQRQQQILGQDNLLMAKMEIKSEKQSTSNSSDKSHAHGYGIPLTPPSSLPSDDSEGNLSPEHLFAPLSPNATVSISVANPAGGESSVRVSRTAASITRSSSGSASASGSSTSSTVTTTRQPIHTPLISSQPKGSTGTLLLTEEEKRTLLAEGYPIPQKLPLTKAEEKSLKKIRRKIKNKISAQESRRKKKEYMDQLERRVEILVTENHDYKKRLEGLEETNANLLSQLHKLQALVSKHNVKKS</sequence>
<reference key="1">
    <citation type="journal article" date="1992" name="Genes Dev.">
        <title>A Drosophila CREB/ATF transcriptional activator binds to both fat body- and liver-specific regulatory elements.</title>
        <authorList>
            <person name="Abel T."/>
            <person name="Bhatt R."/>
            <person name="Maniatis T."/>
        </authorList>
    </citation>
    <scope>NUCLEOTIDE SEQUENCE [MRNA]</scope>
    <scope>FUNCTION</scope>
    <source>
        <strain>Oregon-R</strain>
        <tissue>Embryo</tissue>
    </source>
</reference>
<reference key="2">
    <citation type="journal article" date="1992" name="Mol. Cell. Biol.">
        <title>A cyclic AMP-responsive element-binding transcriptional activator in Drosophila melanogaster, dCREB-A, is a member of the leucine zipper family.</title>
        <authorList>
            <person name="Smolik S.M."/>
            <person name="Rose T.M."/>
            <person name="Goodman R.H."/>
        </authorList>
    </citation>
    <scope>NUCLEOTIDE SEQUENCE [MRNA]</scope>
    <scope>FUNCTION</scope>
    <scope>TISSUE SPECIFICITY</scope>
    <source>
        <tissue>Embryo</tissue>
    </source>
</reference>
<reference key="3">
    <citation type="journal article" date="2000" name="Science">
        <title>The genome sequence of Drosophila melanogaster.</title>
        <authorList>
            <person name="Adams M.D."/>
            <person name="Celniker S.E."/>
            <person name="Holt R.A."/>
            <person name="Evans C.A."/>
            <person name="Gocayne J.D."/>
            <person name="Amanatides P.G."/>
            <person name="Scherer S.E."/>
            <person name="Li P.W."/>
            <person name="Hoskins R.A."/>
            <person name="Galle R.F."/>
            <person name="George R.A."/>
            <person name="Lewis S.E."/>
            <person name="Richards S."/>
            <person name="Ashburner M."/>
            <person name="Henderson S.N."/>
            <person name="Sutton G.G."/>
            <person name="Wortman J.R."/>
            <person name="Yandell M.D."/>
            <person name="Zhang Q."/>
            <person name="Chen L.X."/>
            <person name="Brandon R.C."/>
            <person name="Rogers Y.-H.C."/>
            <person name="Blazej R.G."/>
            <person name="Champe M."/>
            <person name="Pfeiffer B.D."/>
            <person name="Wan K.H."/>
            <person name="Doyle C."/>
            <person name="Baxter E.G."/>
            <person name="Helt G."/>
            <person name="Nelson C.R."/>
            <person name="Miklos G.L.G."/>
            <person name="Abril J.F."/>
            <person name="Agbayani A."/>
            <person name="An H.-J."/>
            <person name="Andrews-Pfannkoch C."/>
            <person name="Baldwin D."/>
            <person name="Ballew R.M."/>
            <person name="Basu A."/>
            <person name="Baxendale J."/>
            <person name="Bayraktaroglu L."/>
            <person name="Beasley E.M."/>
            <person name="Beeson K.Y."/>
            <person name="Benos P.V."/>
            <person name="Berman B.P."/>
            <person name="Bhandari D."/>
            <person name="Bolshakov S."/>
            <person name="Borkova D."/>
            <person name="Botchan M.R."/>
            <person name="Bouck J."/>
            <person name="Brokstein P."/>
            <person name="Brottier P."/>
            <person name="Burtis K.C."/>
            <person name="Busam D.A."/>
            <person name="Butler H."/>
            <person name="Cadieu E."/>
            <person name="Center A."/>
            <person name="Chandra I."/>
            <person name="Cherry J.M."/>
            <person name="Cawley S."/>
            <person name="Dahlke C."/>
            <person name="Davenport L.B."/>
            <person name="Davies P."/>
            <person name="de Pablos B."/>
            <person name="Delcher A."/>
            <person name="Deng Z."/>
            <person name="Mays A.D."/>
            <person name="Dew I."/>
            <person name="Dietz S.M."/>
            <person name="Dodson K."/>
            <person name="Doup L.E."/>
            <person name="Downes M."/>
            <person name="Dugan-Rocha S."/>
            <person name="Dunkov B.C."/>
            <person name="Dunn P."/>
            <person name="Durbin K.J."/>
            <person name="Evangelista C.C."/>
            <person name="Ferraz C."/>
            <person name="Ferriera S."/>
            <person name="Fleischmann W."/>
            <person name="Fosler C."/>
            <person name="Gabrielian A.E."/>
            <person name="Garg N.S."/>
            <person name="Gelbart W.M."/>
            <person name="Glasser K."/>
            <person name="Glodek A."/>
            <person name="Gong F."/>
            <person name="Gorrell J.H."/>
            <person name="Gu Z."/>
            <person name="Guan P."/>
            <person name="Harris M."/>
            <person name="Harris N.L."/>
            <person name="Harvey D.A."/>
            <person name="Heiman T.J."/>
            <person name="Hernandez J.R."/>
            <person name="Houck J."/>
            <person name="Hostin D."/>
            <person name="Houston K.A."/>
            <person name="Howland T.J."/>
            <person name="Wei M.-H."/>
            <person name="Ibegwam C."/>
            <person name="Jalali M."/>
            <person name="Kalush F."/>
            <person name="Karpen G.H."/>
            <person name="Ke Z."/>
            <person name="Kennison J.A."/>
            <person name="Ketchum K.A."/>
            <person name="Kimmel B.E."/>
            <person name="Kodira C.D."/>
            <person name="Kraft C.L."/>
            <person name="Kravitz S."/>
            <person name="Kulp D."/>
            <person name="Lai Z."/>
            <person name="Lasko P."/>
            <person name="Lei Y."/>
            <person name="Levitsky A.A."/>
            <person name="Li J.H."/>
            <person name="Li Z."/>
            <person name="Liang Y."/>
            <person name="Lin X."/>
            <person name="Liu X."/>
            <person name="Mattei B."/>
            <person name="McIntosh T.C."/>
            <person name="McLeod M.P."/>
            <person name="McPherson D."/>
            <person name="Merkulov G."/>
            <person name="Milshina N.V."/>
            <person name="Mobarry C."/>
            <person name="Morris J."/>
            <person name="Moshrefi A."/>
            <person name="Mount S.M."/>
            <person name="Moy M."/>
            <person name="Murphy B."/>
            <person name="Murphy L."/>
            <person name="Muzny D.M."/>
            <person name="Nelson D.L."/>
            <person name="Nelson D.R."/>
            <person name="Nelson K.A."/>
            <person name="Nixon K."/>
            <person name="Nusskern D.R."/>
            <person name="Pacleb J.M."/>
            <person name="Palazzolo M."/>
            <person name="Pittman G.S."/>
            <person name="Pan S."/>
            <person name="Pollard J."/>
            <person name="Puri V."/>
            <person name="Reese M.G."/>
            <person name="Reinert K."/>
            <person name="Remington K."/>
            <person name="Saunders R.D.C."/>
            <person name="Scheeler F."/>
            <person name="Shen H."/>
            <person name="Shue B.C."/>
            <person name="Siden-Kiamos I."/>
            <person name="Simpson M."/>
            <person name="Skupski M.P."/>
            <person name="Smith T.J."/>
            <person name="Spier E."/>
            <person name="Spradling A.C."/>
            <person name="Stapleton M."/>
            <person name="Strong R."/>
            <person name="Sun E."/>
            <person name="Svirskas R."/>
            <person name="Tector C."/>
            <person name="Turner R."/>
            <person name="Venter E."/>
            <person name="Wang A.H."/>
            <person name="Wang X."/>
            <person name="Wang Z.-Y."/>
            <person name="Wassarman D.A."/>
            <person name="Weinstock G.M."/>
            <person name="Weissenbach J."/>
            <person name="Williams S.M."/>
            <person name="Woodage T."/>
            <person name="Worley K.C."/>
            <person name="Wu D."/>
            <person name="Yang S."/>
            <person name="Yao Q.A."/>
            <person name="Ye J."/>
            <person name="Yeh R.-F."/>
            <person name="Zaveri J.S."/>
            <person name="Zhan M."/>
            <person name="Zhang G."/>
            <person name="Zhao Q."/>
            <person name="Zheng L."/>
            <person name="Zheng X.H."/>
            <person name="Zhong F.N."/>
            <person name="Zhong W."/>
            <person name="Zhou X."/>
            <person name="Zhu S.C."/>
            <person name="Zhu X."/>
            <person name="Smith H.O."/>
            <person name="Gibbs R.A."/>
            <person name="Myers E.W."/>
            <person name="Rubin G.M."/>
            <person name="Venter J.C."/>
        </authorList>
    </citation>
    <scope>NUCLEOTIDE SEQUENCE [LARGE SCALE GENOMIC DNA]</scope>
    <source>
        <strain>Berkeley</strain>
    </source>
</reference>
<reference key="4">
    <citation type="journal article" date="2002" name="Genome Biol.">
        <title>Annotation of the Drosophila melanogaster euchromatic genome: a systematic review.</title>
        <authorList>
            <person name="Misra S."/>
            <person name="Crosby M.A."/>
            <person name="Mungall C.J."/>
            <person name="Matthews B.B."/>
            <person name="Campbell K.S."/>
            <person name="Hradecky P."/>
            <person name="Huang Y."/>
            <person name="Kaminker J.S."/>
            <person name="Millburn G.H."/>
            <person name="Prochnik S.E."/>
            <person name="Smith C.D."/>
            <person name="Tupy J.L."/>
            <person name="Whitfield E.J."/>
            <person name="Bayraktaroglu L."/>
            <person name="Berman B.P."/>
            <person name="Bettencourt B.R."/>
            <person name="Celniker S.E."/>
            <person name="de Grey A.D.N.J."/>
            <person name="Drysdale R.A."/>
            <person name="Harris N.L."/>
            <person name="Richter J."/>
            <person name="Russo S."/>
            <person name="Schroeder A.J."/>
            <person name="Shu S.Q."/>
            <person name="Stapleton M."/>
            <person name="Yamada C."/>
            <person name="Ashburner M."/>
            <person name="Gelbart W.M."/>
            <person name="Rubin G.M."/>
            <person name="Lewis S.E."/>
        </authorList>
    </citation>
    <scope>GENOME REANNOTATION</scope>
    <source>
        <strain>Berkeley</strain>
    </source>
</reference>
<reference key="5">
    <citation type="journal article" date="2002" name="Genome Biol.">
        <title>A Drosophila full-length cDNA resource.</title>
        <authorList>
            <person name="Stapleton M."/>
            <person name="Carlson J.W."/>
            <person name="Brokstein P."/>
            <person name="Yu C."/>
            <person name="Champe M."/>
            <person name="George R.A."/>
            <person name="Guarin H."/>
            <person name="Kronmiller B."/>
            <person name="Pacleb J.M."/>
            <person name="Park S."/>
            <person name="Wan K.H."/>
            <person name="Rubin G.M."/>
            <person name="Celniker S.E."/>
        </authorList>
    </citation>
    <scope>NUCLEOTIDE SEQUENCE [LARGE SCALE MRNA] OF 1-18</scope>
    <source>
        <strain>Berkeley</strain>
        <tissue>Embryo</tissue>
    </source>
</reference>
<reference key="6">
    <citation type="submission" date="2004-09" db="EMBL/GenBank/DDBJ databases">
        <authorList>
            <person name="Stapleton M."/>
            <person name="Carlson J.W."/>
            <person name="Chavez C."/>
            <person name="Frise E."/>
            <person name="George R.A."/>
            <person name="Pacleb J.M."/>
            <person name="Park S."/>
            <person name="Wan K.H."/>
            <person name="Yu C."/>
            <person name="Rubin G.M."/>
            <person name="Celniker S.E."/>
        </authorList>
    </citation>
    <scope>SEQUENCE REVISION</scope>
</reference>
<reference key="7">
    <citation type="submission" date="2003-12" db="EMBL/GenBank/DDBJ databases">
        <authorList>
            <person name="Stapleton M."/>
            <person name="Brokstein P."/>
            <person name="Hong L."/>
            <person name="Agbayani A."/>
            <person name="Carlson J.W."/>
            <person name="Champe M."/>
            <person name="Chavez C."/>
            <person name="Dorsett V."/>
            <person name="Dresnek D."/>
            <person name="Farfan D."/>
            <person name="Frise E."/>
            <person name="George R.A."/>
            <person name="Gonzalez M."/>
            <person name="Guarin H."/>
            <person name="Kronmiller B."/>
            <person name="Li P.W."/>
            <person name="Liao G."/>
            <person name="Miranda A."/>
            <person name="Mungall C.J."/>
            <person name="Nunoo J."/>
            <person name="Pacleb J.M."/>
            <person name="Paragas V."/>
            <person name="Park S."/>
            <person name="Patel S."/>
            <person name="Phouanenavong S."/>
            <person name="Wan K.H."/>
            <person name="Yu C."/>
            <person name="Lewis S.E."/>
            <person name="Rubin G.M."/>
            <person name="Celniker S.E."/>
        </authorList>
    </citation>
    <scope>NUCLEOTIDE SEQUENCE [LARGE SCALE MRNA] OF 221-516</scope>
    <source>
        <strain>Berkeley</strain>
        <tissue>Embryo</tissue>
    </source>
</reference>
<reference key="8">
    <citation type="journal article" date="2008" name="J. Proteome Res.">
        <title>Phosphoproteome analysis of Drosophila melanogaster embryos.</title>
        <authorList>
            <person name="Zhai B."/>
            <person name="Villen J."/>
            <person name="Beausoleil S.A."/>
            <person name="Mintseris J."/>
            <person name="Gygi S.P."/>
        </authorList>
    </citation>
    <scope>PHOSPHORYLATION [LARGE SCALE ANALYSIS] AT SER-75; SER-79 AND SER-82</scope>
    <scope>IDENTIFICATION BY MASS SPECTROMETRY</scope>
    <source>
        <tissue>Embryo</tissue>
    </source>
</reference>